<comment type="function">
    <text evidence="1">Protein transport. Probably involved in vesicular traffic (By similarity).</text>
</comment>
<comment type="similarity">
    <text evidence="3">Belongs to the small GTPase superfamily. Rab family.</text>
</comment>
<dbReference type="EMBL" id="AAFI02000003">
    <property type="protein sequence ID" value="EAL73487.1"/>
    <property type="molecule type" value="Genomic_DNA"/>
</dbReference>
<dbReference type="RefSeq" id="XP_647531.1">
    <property type="nucleotide sequence ID" value="XM_642439.1"/>
</dbReference>
<dbReference type="SMR" id="Q55FK2"/>
<dbReference type="FunCoup" id="Q55FK2">
    <property type="interactions" value="306"/>
</dbReference>
<dbReference type="STRING" id="44689.Q55FK2"/>
<dbReference type="PaxDb" id="44689-DDB0229392"/>
<dbReference type="EnsemblProtists" id="EAL73487">
    <property type="protein sequence ID" value="EAL73487"/>
    <property type="gene ID" value="DDB_G0268068"/>
</dbReference>
<dbReference type="GeneID" id="8616338"/>
<dbReference type="KEGG" id="ddi:DDB_G0268068"/>
<dbReference type="dictyBase" id="DDB_G0268068">
    <property type="gene designation" value="rab6"/>
</dbReference>
<dbReference type="VEuPathDB" id="AmoebaDB:DDB_G0268068"/>
<dbReference type="eggNOG" id="KOG0094">
    <property type="taxonomic scope" value="Eukaryota"/>
</dbReference>
<dbReference type="HOGENOM" id="CLU_041217_10_2_1"/>
<dbReference type="InParanoid" id="Q55FK2"/>
<dbReference type="OMA" id="PVSNDGC"/>
<dbReference type="PhylomeDB" id="Q55FK2"/>
<dbReference type="Reactome" id="R-DDI-6798695">
    <property type="pathway name" value="Neutrophil degranulation"/>
</dbReference>
<dbReference type="Reactome" id="R-DDI-6811438">
    <property type="pathway name" value="Intra-Golgi traffic"/>
</dbReference>
<dbReference type="Reactome" id="R-DDI-6811440">
    <property type="pathway name" value="Retrograde transport at the Trans-Golgi-Network"/>
</dbReference>
<dbReference type="Reactome" id="R-DDI-8873719">
    <property type="pathway name" value="RAB geranylgeranylation"/>
</dbReference>
<dbReference type="Reactome" id="R-DDI-8876198">
    <property type="pathway name" value="RAB GEFs exchange GTP for GDP on RABs"/>
</dbReference>
<dbReference type="PRO" id="PR:Q55FK2"/>
<dbReference type="Proteomes" id="UP000002195">
    <property type="component" value="Chromosome 1"/>
</dbReference>
<dbReference type="GO" id="GO:0005829">
    <property type="term" value="C:cytosol"/>
    <property type="evidence" value="ECO:0007669"/>
    <property type="project" value="GOC"/>
</dbReference>
<dbReference type="GO" id="GO:0012505">
    <property type="term" value="C:endomembrane system"/>
    <property type="evidence" value="ECO:0000318"/>
    <property type="project" value="GO_Central"/>
</dbReference>
<dbReference type="GO" id="GO:0005794">
    <property type="term" value="C:Golgi apparatus"/>
    <property type="evidence" value="ECO:0000318"/>
    <property type="project" value="GO_Central"/>
</dbReference>
<dbReference type="GO" id="GO:0005811">
    <property type="term" value="C:lipid droplet"/>
    <property type="evidence" value="ECO:0007005"/>
    <property type="project" value="dictyBase"/>
</dbReference>
<dbReference type="GO" id="GO:0140220">
    <property type="term" value="C:pathogen-containing vacuole"/>
    <property type="evidence" value="ECO:0007005"/>
    <property type="project" value="dictyBase"/>
</dbReference>
<dbReference type="GO" id="GO:0005525">
    <property type="term" value="F:GTP binding"/>
    <property type="evidence" value="ECO:0007669"/>
    <property type="project" value="UniProtKB-KW"/>
</dbReference>
<dbReference type="GO" id="GO:0003924">
    <property type="term" value="F:GTPase activity"/>
    <property type="evidence" value="ECO:0000318"/>
    <property type="project" value="GO_Central"/>
</dbReference>
<dbReference type="GO" id="GO:0006891">
    <property type="term" value="P:intra-Golgi vesicle-mediated transport"/>
    <property type="evidence" value="ECO:0000318"/>
    <property type="project" value="GO_Central"/>
</dbReference>
<dbReference type="GO" id="GO:0006886">
    <property type="term" value="P:intracellular protein transport"/>
    <property type="evidence" value="ECO:0000318"/>
    <property type="project" value="GO_Central"/>
</dbReference>
<dbReference type="GO" id="GO:0042147">
    <property type="term" value="P:retrograde transport, endosome to Golgi"/>
    <property type="evidence" value="ECO:0000318"/>
    <property type="project" value="GO_Central"/>
</dbReference>
<dbReference type="GO" id="GO:0006890">
    <property type="term" value="P:retrograde vesicle-mediated transport, Golgi to endoplasmic reticulum"/>
    <property type="evidence" value="ECO:0000318"/>
    <property type="project" value="GO_Central"/>
</dbReference>
<dbReference type="CDD" id="cd01861">
    <property type="entry name" value="Rab6"/>
    <property type="match status" value="1"/>
</dbReference>
<dbReference type="FunFam" id="3.40.50.300:FF:000229">
    <property type="entry name" value="Probable Ras-related protein Rab-6A"/>
    <property type="match status" value="1"/>
</dbReference>
<dbReference type="Gene3D" id="3.40.50.300">
    <property type="entry name" value="P-loop containing nucleotide triphosphate hydrolases"/>
    <property type="match status" value="1"/>
</dbReference>
<dbReference type="InterPro" id="IPR027417">
    <property type="entry name" value="P-loop_NTPase"/>
</dbReference>
<dbReference type="InterPro" id="IPR050227">
    <property type="entry name" value="Rab"/>
</dbReference>
<dbReference type="InterPro" id="IPR005225">
    <property type="entry name" value="Small_GTP-bd"/>
</dbReference>
<dbReference type="InterPro" id="IPR001806">
    <property type="entry name" value="Small_GTPase"/>
</dbReference>
<dbReference type="NCBIfam" id="TIGR00231">
    <property type="entry name" value="small_GTP"/>
    <property type="match status" value="1"/>
</dbReference>
<dbReference type="PANTHER" id="PTHR47977">
    <property type="entry name" value="RAS-RELATED PROTEIN RAB"/>
    <property type="match status" value="1"/>
</dbReference>
<dbReference type="Pfam" id="PF00071">
    <property type="entry name" value="Ras"/>
    <property type="match status" value="1"/>
</dbReference>
<dbReference type="PRINTS" id="PR00449">
    <property type="entry name" value="RASTRNSFRMNG"/>
</dbReference>
<dbReference type="SMART" id="SM00175">
    <property type="entry name" value="RAB"/>
    <property type="match status" value="1"/>
</dbReference>
<dbReference type="SMART" id="SM00176">
    <property type="entry name" value="RAN"/>
    <property type="match status" value="1"/>
</dbReference>
<dbReference type="SMART" id="SM00173">
    <property type="entry name" value="RAS"/>
    <property type="match status" value="1"/>
</dbReference>
<dbReference type="SMART" id="SM00174">
    <property type="entry name" value="RHO"/>
    <property type="match status" value="1"/>
</dbReference>
<dbReference type="SUPFAM" id="SSF52540">
    <property type="entry name" value="P-loop containing nucleoside triphosphate hydrolases"/>
    <property type="match status" value="1"/>
</dbReference>
<dbReference type="PROSITE" id="PS51419">
    <property type="entry name" value="RAB"/>
    <property type="match status" value="1"/>
</dbReference>
<proteinExistence type="inferred from homology"/>
<feature type="chain" id="PRO_0000330646" description="Ras-related protein Rab-6">
    <location>
        <begin position="1"/>
        <end position="208"/>
    </location>
</feature>
<feature type="binding site" evidence="1">
    <location>
        <begin position="14"/>
        <end position="21"/>
    </location>
    <ligand>
        <name>GTP</name>
        <dbReference type="ChEBI" id="CHEBI:37565"/>
    </ligand>
</feature>
<feature type="binding site" evidence="1">
    <location>
        <position position="38"/>
    </location>
    <ligand>
        <name>GTP</name>
        <dbReference type="ChEBI" id="CHEBI:37565"/>
    </ligand>
</feature>
<feature type="binding site" evidence="1">
    <location>
        <begin position="62"/>
        <end position="66"/>
    </location>
    <ligand>
        <name>GTP</name>
        <dbReference type="ChEBI" id="CHEBI:37565"/>
    </ligand>
</feature>
<feature type="binding site" evidence="1">
    <location>
        <begin position="120"/>
        <end position="123"/>
    </location>
    <ligand>
        <name>GTP</name>
        <dbReference type="ChEBI" id="CHEBI:37565"/>
    </ligand>
</feature>
<feature type="lipid moiety-binding region" description="S-geranylgeranyl cysteine" evidence="2">
    <location>
        <position position="208"/>
    </location>
</feature>
<sequence>MESLSKYKLVFLGDQSVGKTSIITRFMYDTFDITYQATIGIDFLSKTMYLEDRTVRLQLWDTAGQERFRSLIPSYIRDSSVAIVVYDITNKVSFTNTIKWIEDVRNERGNNVVIMLVGNKTDLADKRQVSIEEGEAKAKEYDIMFTETSAKAGFNIKALFRKVASALPGIDSNSMTKNQHEIISEVDITDGGKPALKEGDGFCSSSRC</sequence>
<accession>Q55FK2</accession>
<name>RAB6_DICDI</name>
<protein>
    <recommendedName>
        <fullName>Ras-related protein Rab-6</fullName>
    </recommendedName>
</protein>
<reference key="1">
    <citation type="journal article" date="2005" name="Nature">
        <title>The genome of the social amoeba Dictyostelium discoideum.</title>
        <authorList>
            <person name="Eichinger L."/>
            <person name="Pachebat J.A."/>
            <person name="Gloeckner G."/>
            <person name="Rajandream M.A."/>
            <person name="Sucgang R."/>
            <person name="Berriman M."/>
            <person name="Song J."/>
            <person name="Olsen R."/>
            <person name="Szafranski K."/>
            <person name="Xu Q."/>
            <person name="Tunggal B."/>
            <person name="Kummerfeld S."/>
            <person name="Madera M."/>
            <person name="Konfortov B.A."/>
            <person name="Rivero F."/>
            <person name="Bankier A.T."/>
            <person name="Lehmann R."/>
            <person name="Hamlin N."/>
            <person name="Davies R."/>
            <person name="Gaudet P."/>
            <person name="Fey P."/>
            <person name="Pilcher K."/>
            <person name="Chen G."/>
            <person name="Saunders D."/>
            <person name="Sodergren E.J."/>
            <person name="Davis P."/>
            <person name="Kerhornou A."/>
            <person name="Nie X."/>
            <person name="Hall N."/>
            <person name="Anjard C."/>
            <person name="Hemphill L."/>
            <person name="Bason N."/>
            <person name="Farbrother P."/>
            <person name="Desany B."/>
            <person name="Just E."/>
            <person name="Morio T."/>
            <person name="Rost R."/>
            <person name="Churcher C.M."/>
            <person name="Cooper J."/>
            <person name="Haydock S."/>
            <person name="van Driessche N."/>
            <person name="Cronin A."/>
            <person name="Goodhead I."/>
            <person name="Muzny D.M."/>
            <person name="Mourier T."/>
            <person name="Pain A."/>
            <person name="Lu M."/>
            <person name="Harper D."/>
            <person name="Lindsay R."/>
            <person name="Hauser H."/>
            <person name="James K.D."/>
            <person name="Quiles M."/>
            <person name="Madan Babu M."/>
            <person name="Saito T."/>
            <person name="Buchrieser C."/>
            <person name="Wardroper A."/>
            <person name="Felder M."/>
            <person name="Thangavelu M."/>
            <person name="Johnson D."/>
            <person name="Knights A."/>
            <person name="Loulseged H."/>
            <person name="Mungall K.L."/>
            <person name="Oliver K."/>
            <person name="Price C."/>
            <person name="Quail M.A."/>
            <person name="Urushihara H."/>
            <person name="Hernandez J."/>
            <person name="Rabbinowitsch E."/>
            <person name="Steffen D."/>
            <person name="Sanders M."/>
            <person name="Ma J."/>
            <person name="Kohara Y."/>
            <person name="Sharp S."/>
            <person name="Simmonds M.N."/>
            <person name="Spiegler S."/>
            <person name="Tivey A."/>
            <person name="Sugano S."/>
            <person name="White B."/>
            <person name="Walker D."/>
            <person name="Woodward J.R."/>
            <person name="Winckler T."/>
            <person name="Tanaka Y."/>
            <person name="Shaulsky G."/>
            <person name="Schleicher M."/>
            <person name="Weinstock G.M."/>
            <person name="Rosenthal A."/>
            <person name="Cox E.C."/>
            <person name="Chisholm R.L."/>
            <person name="Gibbs R.A."/>
            <person name="Loomis W.F."/>
            <person name="Platzer M."/>
            <person name="Kay R.R."/>
            <person name="Williams J.G."/>
            <person name="Dear P.H."/>
            <person name="Noegel A.A."/>
            <person name="Barrell B.G."/>
            <person name="Kuspa A."/>
        </authorList>
    </citation>
    <scope>NUCLEOTIDE SEQUENCE [LARGE SCALE GENOMIC DNA]</scope>
    <source>
        <strain>AX4</strain>
    </source>
</reference>
<evidence type="ECO:0000250" key="1"/>
<evidence type="ECO:0000255" key="2"/>
<evidence type="ECO:0000305" key="3"/>
<keyword id="KW-0342">GTP-binding</keyword>
<keyword id="KW-0449">Lipoprotein</keyword>
<keyword id="KW-0547">Nucleotide-binding</keyword>
<keyword id="KW-0636">Prenylation</keyword>
<keyword id="KW-0653">Protein transport</keyword>
<keyword id="KW-1185">Reference proteome</keyword>
<keyword id="KW-0813">Transport</keyword>
<gene>
    <name type="primary">rab6</name>
    <name type="ORF">DDB_G0268068</name>
</gene>
<organism>
    <name type="scientific">Dictyostelium discoideum</name>
    <name type="common">Social amoeba</name>
    <dbReference type="NCBI Taxonomy" id="44689"/>
    <lineage>
        <taxon>Eukaryota</taxon>
        <taxon>Amoebozoa</taxon>
        <taxon>Evosea</taxon>
        <taxon>Eumycetozoa</taxon>
        <taxon>Dictyostelia</taxon>
        <taxon>Dictyosteliales</taxon>
        <taxon>Dictyosteliaceae</taxon>
        <taxon>Dictyostelium</taxon>
    </lineage>
</organism>